<gene>
    <name type="primary">TRHR</name>
</gene>
<comment type="function">
    <text evidence="1">Receptor for thyrotropin-releasing hormone (TRH). Upon ligand binding, this G-protein-coupled receptor triggers activation of the phosphatidylinositol (IP3)-calcium-protein kinase C (PKC) pathway.</text>
</comment>
<comment type="subcellular location">
    <subcellularLocation>
        <location evidence="1">Cell membrane</location>
        <topology evidence="2">Multi-pass membrane protein</topology>
    </subcellularLocation>
</comment>
<comment type="similarity">
    <text evidence="3">Belongs to the G-protein coupled receptor 1 family.</text>
</comment>
<evidence type="ECO:0000250" key="1">
    <source>
        <dbReference type="UniProtKB" id="P34981"/>
    </source>
</evidence>
<evidence type="ECO:0000255" key="2"/>
<evidence type="ECO:0000255" key="3">
    <source>
        <dbReference type="PROSITE-ProRule" id="PRU00521"/>
    </source>
</evidence>
<dbReference type="EMBL" id="X95285">
    <property type="protein sequence ID" value="CAA64606.1"/>
    <property type="molecule type" value="mRNA"/>
</dbReference>
<dbReference type="RefSeq" id="NP_001009407.1">
    <property type="nucleotide sequence ID" value="NM_001009407.1"/>
</dbReference>
<dbReference type="RefSeq" id="XP_012038762.1">
    <property type="nucleotide sequence ID" value="XM_012183372.2"/>
</dbReference>
<dbReference type="SMR" id="Q28596"/>
<dbReference type="STRING" id="9940.ENSOARP00000015611"/>
<dbReference type="GlyCosmos" id="Q28596">
    <property type="glycosylation" value="2 sites, No reported glycans"/>
</dbReference>
<dbReference type="PaxDb" id="9940-ENSOARP00000015611"/>
<dbReference type="Ensembl" id="ENSOART00025027200">
    <property type="protein sequence ID" value="ENSOARP00025013203"/>
    <property type="gene ID" value="ENSOARG00025016578"/>
</dbReference>
<dbReference type="Ensembl" id="ENSOART00180019172">
    <property type="protein sequence ID" value="ENSOARP00180009790"/>
    <property type="gene ID" value="ENSOARG00180011735"/>
</dbReference>
<dbReference type="Ensembl" id="ENSOART00215037445">
    <property type="protein sequence ID" value="ENSOARP00215019387"/>
    <property type="gene ID" value="ENSOARG00215022527"/>
</dbReference>
<dbReference type="Ensembl" id="ENSOART00220030437">
    <property type="protein sequence ID" value="ENSOARP00220016846"/>
    <property type="gene ID" value="ENSOARG00220018231"/>
</dbReference>
<dbReference type="Ensembl" id="ENSOART00225013146">
    <property type="protein sequence ID" value="ENSOARP00225006108"/>
    <property type="gene ID" value="ENSOARG00225008068"/>
</dbReference>
<dbReference type="Ensembl" id="ENSOART00260008449">
    <property type="protein sequence ID" value="ENSOARP00260004338"/>
    <property type="gene ID" value="ENSOARG00260005163"/>
</dbReference>
<dbReference type="GeneID" id="443425"/>
<dbReference type="KEGG" id="oas:443425"/>
<dbReference type="CTD" id="7201"/>
<dbReference type="eggNOG" id="KOG3656">
    <property type="taxonomic scope" value="Eukaryota"/>
</dbReference>
<dbReference type="HOGENOM" id="CLU_009579_6_5_1"/>
<dbReference type="OMA" id="NCKQKPA"/>
<dbReference type="OrthoDB" id="10036964at2759"/>
<dbReference type="Proteomes" id="UP000002356">
    <property type="component" value="Chromosome 9"/>
</dbReference>
<dbReference type="Bgee" id="ENSOARG00000014552">
    <property type="expression patterns" value="Expressed in pituitary gland and 3 other cell types or tissues"/>
</dbReference>
<dbReference type="GO" id="GO:0005886">
    <property type="term" value="C:plasma membrane"/>
    <property type="evidence" value="ECO:0007669"/>
    <property type="project" value="UniProtKB-SubCell"/>
</dbReference>
<dbReference type="GO" id="GO:0004997">
    <property type="term" value="F:thyrotropin-releasing hormone receptor activity"/>
    <property type="evidence" value="ECO:0007669"/>
    <property type="project" value="InterPro"/>
</dbReference>
<dbReference type="GO" id="GO:0007200">
    <property type="term" value="P:phospholipase C-activating G protein-coupled receptor signaling pathway"/>
    <property type="evidence" value="ECO:0007669"/>
    <property type="project" value="TreeGrafter"/>
</dbReference>
<dbReference type="CDD" id="cd14995">
    <property type="entry name" value="7tmA_TRH-R"/>
    <property type="match status" value="1"/>
</dbReference>
<dbReference type="FunFam" id="1.20.1070.10:FF:000186">
    <property type="entry name" value="thyrotropin-releasing hormone receptor"/>
    <property type="match status" value="1"/>
</dbReference>
<dbReference type="Gene3D" id="1.20.1070.10">
    <property type="entry name" value="Rhodopsin 7-helix transmembrane proteins"/>
    <property type="match status" value="1"/>
</dbReference>
<dbReference type="InterPro" id="IPR000276">
    <property type="entry name" value="GPCR_Rhodpsn"/>
</dbReference>
<dbReference type="InterPro" id="IPR017452">
    <property type="entry name" value="GPCR_Rhodpsn_7TM"/>
</dbReference>
<dbReference type="InterPro" id="IPR002120">
    <property type="entry name" value="TRH_rcpt_1"/>
</dbReference>
<dbReference type="PANTHER" id="PTHR46061">
    <property type="entry name" value="THYROTROPIN-RELEASING HORMONE RECEPTOR"/>
    <property type="match status" value="1"/>
</dbReference>
<dbReference type="PANTHER" id="PTHR46061:SF2">
    <property type="entry name" value="THYROTROPIN-RELEASING HORMONE RECEPTOR"/>
    <property type="match status" value="1"/>
</dbReference>
<dbReference type="Pfam" id="PF00001">
    <property type="entry name" value="7tm_1"/>
    <property type="match status" value="1"/>
</dbReference>
<dbReference type="PRINTS" id="PR00237">
    <property type="entry name" value="GPCRRHODOPSN"/>
</dbReference>
<dbReference type="PRINTS" id="PR00751">
    <property type="entry name" value="THYROLIBRINR"/>
</dbReference>
<dbReference type="PRINTS" id="PR01846">
    <property type="entry name" value="TRHRFAMILY"/>
</dbReference>
<dbReference type="SMART" id="SM01381">
    <property type="entry name" value="7TM_GPCR_Srsx"/>
    <property type="match status" value="1"/>
</dbReference>
<dbReference type="SUPFAM" id="SSF81321">
    <property type="entry name" value="Family A G protein-coupled receptor-like"/>
    <property type="match status" value="1"/>
</dbReference>
<dbReference type="PROSITE" id="PS00237">
    <property type="entry name" value="G_PROTEIN_RECEP_F1_1"/>
    <property type="match status" value="1"/>
</dbReference>
<dbReference type="PROSITE" id="PS50262">
    <property type="entry name" value="G_PROTEIN_RECEP_F1_2"/>
    <property type="match status" value="1"/>
</dbReference>
<name>TRHR_SHEEP</name>
<sequence length="398" mass="45089">MENETGSELNQTQLQPRAVVALEYQVVTILLVLIICGLGIVGNIMVVLVVMRTKHMRTPTNCYLVSLAVADLMVLVAAGLPNITDSIYGSWVYGYVGCLCITYLQYLGINASSCSITAFTIERYIAICHPIKAQFLCTFSRAKKIIIFVWAFTSIYCMLWFFLLDLNISTYKDAIVVSCGYKISRNYYSPIYLMDFGVFYVVPMILATVLYGFIARILFLSPIPSDPKENSNTWKNDSTHQNKNLNSKTSNRYFNSTVSSRKQVTKMLAVVVILFALLWMPYRTLVVVNSFLSSPFQENWFLLFCRICIYLNSAINPVIYNLMSQKFRAAFRKLCNCKQKPVEKPANYSVALNYSVIKESDHFSTELDDITVTDTYLSATKVSFDDTCLASEVTFSQS</sequence>
<organism>
    <name type="scientific">Ovis aries</name>
    <name type="common">Sheep</name>
    <dbReference type="NCBI Taxonomy" id="9940"/>
    <lineage>
        <taxon>Eukaryota</taxon>
        <taxon>Metazoa</taxon>
        <taxon>Chordata</taxon>
        <taxon>Craniata</taxon>
        <taxon>Vertebrata</taxon>
        <taxon>Euteleostomi</taxon>
        <taxon>Mammalia</taxon>
        <taxon>Eutheria</taxon>
        <taxon>Laurasiatheria</taxon>
        <taxon>Artiodactyla</taxon>
        <taxon>Ruminantia</taxon>
        <taxon>Pecora</taxon>
        <taxon>Bovidae</taxon>
        <taxon>Caprinae</taxon>
        <taxon>Ovis</taxon>
    </lineage>
</organism>
<accession>Q28596</accession>
<reference key="1">
    <citation type="journal article" date="1997" name="Endocrinology">
        <title>Thyrotropin expression in hypophyseal pars tuberalis-specific cells is 3,5,3'-triiodothyronine, thyrotropin-releasing hormone, and pit-1 independent.</title>
        <authorList>
            <person name="Bockmann J."/>
            <person name="Boeckers T.M."/>
            <person name="Winter C."/>
            <person name="Wittkowski W."/>
            <person name="Winterhoff H."/>
            <person name="Deufel T."/>
            <person name="Kreutz M.R."/>
        </authorList>
    </citation>
    <scope>NUCLEOTIDE SEQUENCE [MRNA]</scope>
    <source>
        <tissue>Pituitary</tissue>
    </source>
</reference>
<keyword id="KW-1003">Cell membrane</keyword>
<keyword id="KW-1015">Disulfide bond</keyword>
<keyword id="KW-0297">G-protein coupled receptor</keyword>
<keyword id="KW-0325">Glycoprotein</keyword>
<keyword id="KW-0472">Membrane</keyword>
<keyword id="KW-0675">Receptor</keyword>
<keyword id="KW-1185">Reference proteome</keyword>
<keyword id="KW-0807">Transducer</keyword>
<keyword id="KW-0812">Transmembrane</keyword>
<keyword id="KW-1133">Transmembrane helix</keyword>
<feature type="chain" id="PRO_0000070190" description="Thyrotropin-releasing hormone receptor">
    <location>
        <begin position="1"/>
        <end position="398"/>
    </location>
</feature>
<feature type="topological domain" description="Extracellular" evidence="2">
    <location>
        <begin position="1"/>
        <end position="28"/>
    </location>
</feature>
<feature type="transmembrane region" description="Helical; Name=1" evidence="2">
    <location>
        <begin position="29"/>
        <end position="51"/>
    </location>
</feature>
<feature type="topological domain" description="Cytoplasmic" evidence="2">
    <location>
        <begin position="52"/>
        <end position="61"/>
    </location>
</feature>
<feature type="transmembrane region" description="Helical; Name=2" evidence="2">
    <location>
        <begin position="62"/>
        <end position="83"/>
    </location>
</feature>
<feature type="topological domain" description="Extracellular" evidence="2">
    <location>
        <begin position="84"/>
        <end position="99"/>
    </location>
</feature>
<feature type="transmembrane region" description="Helical; Name=3" evidence="2">
    <location>
        <begin position="100"/>
        <end position="121"/>
    </location>
</feature>
<feature type="topological domain" description="Cytoplasmic" evidence="2">
    <location>
        <begin position="122"/>
        <end position="144"/>
    </location>
</feature>
<feature type="transmembrane region" description="Helical; Name=4" evidence="2">
    <location>
        <begin position="145"/>
        <end position="168"/>
    </location>
</feature>
<feature type="topological domain" description="Extracellular" evidence="2">
    <location>
        <begin position="169"/>
        <end position="193"/>
    </location>
</feature>
<feature type="transmembrane region" description="Helical; Name=5" evidence="2">
    <location>
        <begin position="194"/>
        <end position="215"/>
    </location>
</feature>
<feature type="topological domain" description="Cytoplasmic" evidence="2">
    <location>
        <begin position="216"/>
        <end position="266"/>
    </location>
</feature>
<feature type="transmembrane region" description="Helical; Name=6" evidence="2">
    <location>
        <begin position="267"/>
        <end position="288"/>
    </location>
</feature>
<feature type="topological domain" description="Extracellular" evidence="2">
    <location>
        <begin position="289"/>
        <end position="296"/>
    </location>
</feature>
<feature type="transmembrane region" description="Helical; Name=7" evidence="2">
    <location>
        <begin position="297"/>
        <end position="319"/>
    </location>
</feature>
<feature type="topological domain" description="Cytoplasmic" evidence="2">
    <location>
        <begin position="320"/>
        <end position="398"/>
    </location>
</feature>
<feature type="glycosylation site" description="N-linked (GlcNAc...) asparagine" evidence="2">
    <location>
        <position position="3"/>
    </location>
</feature>
<feature type="glycosylation site" description="N-linked (GlcNAc...) asparagine" evidence="2">
    <location>
        <position position="10"/>
    </location>
</feature>
<feature type="disulfide bond" evidence="3">
    <location>
        <begin position="98"/>
        <end position="179"/>
    </location>
</feature>
<proteinExistence type="evidence at transcript level"/>
<protein>
    <recommendedName>
        <fullName>Thyrotropin-releasing hormone receptor</fullName>
        <shortName>TRH-R</shortName>
    </recommendedName>
    <alternativeName>
        <fullName>Thyroliberin receptor</fullName>
    </alternativeName>
</protein>